<protein>
    <recommendedName>
        <fullName>Uncharacterized protein MJ1311</fullName>
    </recommendedName>
</protein>
<reference key="1">
    <citation type="journal article" date="1996" name="Science">
        <title>Complete genome sequence of the methanogenic archaeon, Methanococcus jannaschii.</title>
        <authorList>
            <person name="Bult C.J."/>
            <person name="White O."/>
            <person name="Olsen G.J."/>
            <person name="Zhou L."/>
            <person name="Fleischmann R.D."/>
            <person name="Sutton G.G."/>
            <person name="Blake J.A."/>
            <person name="FitzGerald L.M."/>
            <person name="Clayton R.A."/>
            <person name="Gocayne J.D."/>
            <person name="Kerlavage A.R."/>
            <person name="Dougherty B.A."/>
            <person name="Tomb J.-F."/>
            <person name="Adams M.D."/>
            <person name="Reich C.I."/>
            <person name="Overbeek R."/>
            <person name="Kirkness E.F."/>
            <person name="Weinstock K.G."/>
            <person name="Merrick J.M."/>
            <person name="Glodek A."/>
            <person name="Scott J.L."/>
            <person name="Geoghagen N.S.M."/>
            <person name="Weidman J.F."/>
            <person name="Fuhrmann J.L."/>
            <person name="Nguyen D."/>
            <person name="Utterback T.R."/>
            <person name="Kelley J.M."/>
            <person name="Peterson J.D."/>
            <person name="Sadow P.W."/>
            <person name="Hanna M.C."/>
            <person name="Cotton M.D."/>
            <person name="Roberts K.M."/>
            <person name="Hurst M.A."/>
            <person name="Kaine B.P."/>
            <person name="Borodovsky M."/>
            <person name="Klenk H.-P."/>
            <person name="Fraser C.M."/>
            <person name="Smith H.O."/>
            <person name="Woese C.R."/>
            <person name="Venter J.C."/>
        </authorList>
    </citation>
    <scope>NUCLEOTIDE SEQUENCE [LARGE SCALE GENOMIC DNA]</scope>
    <source>
        <strain>ATCC 43067 / DSM 2661 / JAL-1 / JCM 10045 / NBRC 100440</strain>
    </source>
</reference>
<feature type="chain" id="PRO_0000107269" description="Uncharacterized protein MJ1311">
    <location>
        <begin position="1"/>
        <end position="293"/>
    </location>
</feature>
<feature type="strand" evidence="2">
    <location>
        <begin position="18"/>
        <end position="22"/>
    </location>
</feature>
<feature type="helix" evidence="2">
    <location>
        <begin position="23"/>
        <end position="25"/>
    </location>
</feature>
<feature type="turn" evidence="2">
    <location>
        <begin position="26"/>
        <end position="28"/>
    </location>
</feature>
<feature type="helix" evidence="2">
    <location>
        <begin position="31"/>
        <end position="39"/>
    </location>
</feature>
<feature type="strand" evidence="2">
    <location>
        <begin position="44"/>
        <end position="49"/>
    </location>
</feature>
<feature type="helix" evidence="2">
    <location>
        <begin position="52"/>
        <end position="54"/>
    </location>
</feature>
<feature type="helix" evidence="2">
    <location>
        <begin position="58"/>
        <end position="70"/>
    </location>
</feature>
<feature type="strand" evidence="2">
    <location>
        <begin position="74"/>
        <end position="78"/>
    </location>
</feature>
<feature type="helix" evidence="2">
    <location>
        <begin position="91"/>
        <end position="110"/>
    </location>
</feature>
<feature type="strand" evidence="2">
    <location>
        <begin position="114"/>
        <end position="118"/>
    </location>
</feature>
<feature type="helix" evidence="2">
    <location>
        <begin position="125"/>
        <end position="127"/>
    </location>
</feature>
<feature type="helix" evidence="2">
    <location>
        <begin position="131"/>
        <end position="152"/>
    </location>
</feature>
<feature type="strand" evidence="2">
    <location>
        <begin position="155"/>
        <end position="159"/>
    </location>
</feature>
<feature type="helix" evidence="2">
    <location>
        <begin position="172"/>
        <end position="179"/>
    </location>
</feature>
<feature type="strand" evidence="2">
    <location>
        <begin position="187"/>
        <end position="192"/>
    </location>
</feature>
<feature type="helix" evidence="2">
    <location>
        <begin position="193"/>
        <end position="199"/>
    </location>
</feature>
<feature type="helix" evidence="2">
    <location>
        <begin position="202"/>
        <end position="204"/>
    </location>
</feature>
<feature type="helix" evidence="2">
    <location>
        <begin position="205"/>
        <end position="209"/>
    </location>
</feature>
<feature type="strand" evidence="2">
    <location>
        <begin position="216"/>
        <end position="221"/>
    </location>
</feature>
<feature type="strand" evidence="2">
    <location>
        <begin position="225"/>
        <end position="228"/>
    </location>
</feature>
<feature type="strand" evidence="2">
    <location>
        <begin position="236"/>
        <end position="238"/>
    </location>
</feature>
<feature type="helix" evidence="2">
    <location>
        <begin position="241"/>
        <end position="250"/>
    </location>
</feature>
<feature type="strand" evidence="2">
    <location>
        <begin position="255"/>
        <end position="259"/>
    </location>
</feature>
<feature type="helix" evidence="2">
    <location>
        <begin position="264"/>
        <end position="284"/>
    </location>
</feature>
<gene>
    <name type="ordered locus">MJ1311</name>
</gene>
<name>Y1311_METJA</name>
<dbReference type="EMBL" id="L77117">
    <property type="protein sequence ID" value="AAB99318.1"/>
    <property type="molecule type" value="Genomic_DNA"/>
</dbReference>
<dbReference type="PIR" id="F64463">
    <property type="entry name" value="F64463"/>
</dbReference>
<dbReference type="PDB" id="3WQO">
    <property type="method" value="X-ray"/>
    <property type="resolution" value="2.64 A"/>
    <property type="chains" value="A/B=1-293"/>
</dbReference>
<dbReference type="PDBsum" id="3WQO"/>
<dbReference type="SMR" id="Q58707"/>
<dbReference type="FunCoup" id="Q58707">
    <property type="interactions" value="1"/>
</dbReference>
<dbReference type="STRING" id="243232.MJ_1311"/>
<dbReference type="PaxDb" id="243232-MJ_1311"/>
<dbReference type="DNASU" id="1452213"/>
<dbReference type="EnsemblBacteria" id="AAB99318">
    <property type="protein sequence ID" value="AAB99318"/>
    <property type="gene ID" value="MJ_1311"/>
</dbReference>
<dbReference type="KEGG" id="mja:MJ_1311"/>
<dbReference type="eggNOG" id="arCOG01895">
    <property type="taxonomic scope" value="Archaea"/>
</dbReference>
<dbReference type="HOGENOM" id="CLU_050006_7_2_2"/>
<dbReference type="InParanoid" id="Q58707"/>
<dbReference type="PhylomeDB" id="Q58707"/>
<dbReference type="BRENDA" id="5.1.3.31">
    <property type="organism ID" value="3260"/>
</dbReference>
<dbReference type="EvolutionaryTrace" id="Q58707"/>
<dbReference type="Proteomes" id="UP000000805">
    <property type="component" value="Chromosome"/>
</dbReference>
<dbReference type="GO" id="GO:0003677">
    <property type="term" value="F:DNA binding"/>
    <property type="evidence" value="ECO:0007669"/>
    <property type="project" value="InterPro"/>
</dbReference>
<dbReference type="GO" id="GO:0008270">
    <property type="term" value="F:zinc ion binding"/>
    <property type="evidence" value="ECO:0007669"/>
    <property type="project" value="InterPro"/>
</dbReference>
<dbReference type="GO" id="GO:0006281">
    <property type="term" value="P:DNA repair"/>
    <property type="evidence" value="ECO:0007669"/>
    <property type="project" value="InterPro"/>
</dbReference>
<dbReference type="Gene3D" id="3.20.20.150">
    <property type="entry name" value="Divalent-metal-dependent TIM barrel enzymes"/>
    <property type="match status" value="1"/>
</dbReference>
<dbReference type="InterPro" id="IPR001719">
    <property type="entry name" value="AP_endonuc_2"/>
</dbReference>
<dbReference type="InterPro" id="IPR050312">
    <property type="entry name" value="IolE/XylAMocC-like"/>
</dbReference>
<dbReference type="InterPro" id="IPR036237">
    <property type="entry name" value="Xyl_isomerase-like_sf"/>
</dbReference>
<dbReference type="InterPro" id="IPR013022">
    <property type="entry name" value="Xyl_isomerase-like_TIM-brl"/>
</dbReference>
<dbReference type="PANTHER" id="PTHR12110">
    <property type="entry name" value="HYDROXYPYRUVATE ISOMERASE"/>
    <property type="match status" value="1"/>
</dbReference>
<dbReference type="PANTHER" id="PTHR12110:SF21">
    <property type="entry name" value="XYLOSE ISOMERASE-LIKE TIM BARREL DOMAIN-CONTAINING PROTEIN"/>
    <property type="match status" value="1"/>
</dbReference>
<dbReference type="Pfam" id="PF01261">
    <property type="entry name" value="AP_endonuc_2"/>
    <property type="match status" value="1"/>
</dbReference>
<dbReference type="SMART" id="SM00518">
    <property type="entry name" value="AP2Ec"/>
    <property type="match status" value="1"/>
</dbReference>
<dbReference type="SUPFAM" id="SSF51658">
    <property type="entry name" value="Xylose isomerase-like"/>
    <property type="match status" value="1"/>
</dbReference>
<sequence>MKRKTKLDKKSKWVLDMKFGVSSLVFLPESLTSSMEKIAEHNFDAWEIVCEGTHYLSPKNIKYLMELRDRYEVEIVVHAPFSDLNPASMNERVRKLTVECIRDAIEGAFELDSEVVVVHPGYIPELWSNYVSEILDNNFSTLSEIVEIAEDYGIKIGLENMPNFRGVLGITPESLLEIVKDIDSKNLGITFDIGHANTAGNPAEFVEKLQNIGIGIIHVHAHDNNGYDDEHLKIGEGNINFIEVLEKLKEIGYDGVISIENKNIRDAVKSKEILKEYLEIVNEKVAEKEKIEE</sequence>
<comment type="similarity">
    <text evidence="1">To M.jannaschii MJ1614 and MJ0008.</text>
</comment>
<organism>
    <name type="scientific">Methanocaldococcus jannaschii (strain ATCC 43067 / DSM 2661 / JAL-1 / JCM 10045 / NBRC 100440)</name>
    <name type="common">Methanococcus jannaschii</name>
    <dbReference type="NCBI Taxonomy" id="243232"/>
    <lineage>
        <taxon>Archaea</taxon>
        <taxon>Methanobacteriati</taxon>
        <taxon>Methanobacteriota</taxon>
        <taxon>Methanomada group</taxon>
        <taxon>Methanococci</taxon>
        <taxon>Methanococcales</taxon>
        <taxon>Methanocaldococcaceae</taxon>
        <taxon>Methanocaldococcus</taxon>
    </lineage>
</organism>
<keyword id="KW-0002">3D-structure</keyword>
<keyword id="KW-1185">Reference proteome</keyword>
<accession>Q58707</accession>
<evidence type="ECO:0000305" key="1"/>
<evidence type="ECO:0007829" key="2">
    <source>
        <dbReference type="PDB" id="3WQO"/>
    </source>
</evidence>
<proteinExistence type="evidence at protein level"/>